<keyword id="KW-0002">3D-structure</keyword>
<keyword id="KW-0007">Acetylation</keyword>
<keyword id="KW-0903">Direct protein sequencing</keyword>
<keyword id="KW-0413">Isomerase</keyword>
<keyword id="KW-0443">Lipid metabolism</keyword>
<keyword id="KW-0560">Oxidoreductase</keyword>
<keyword id="KW-0575">Peroxidase</keyword>
<keyword id="KW-1185">Reference proteome</keyword>
<keyword id="KW-0808">Transferase</keyword>
<proteinExistence type="evidence at protein level"/>
<evidence type="ECO:0000250" key="1">
    <source>
        <dbReference type="UniProtKB" id="P08263"/>
    </source>
</evidence>
<evidence type="ECO:0000250" key="2">
    <source>
        <dbReference type="UniProtKB" id="P30115"/>
    </source>
</evidence>
<evidence type="ECO:0000250" key="3">
    <source>
        <dbReference type="UniProtKB" id="P80894"/>
    </source>
</evidence>
<evidence type="ECO:0000269" key="4">
    <source>
    </source>
</evidence>
<evidence type="ECO:0000269" key="5">
    <source>
    </source>
</evidence>
<evidence type="ECO:0000269" key="6">
    <source>
    </source>
</evidence>
<evidence type="ECO:0000305" key="7"/>
<evidence type="ECO:0000305" key="8">
    <source>
    </source>
</evidence>
<evidence type="ECO:0007829" key="9">
    <source>
        <dbReference type="PDB" id="1F3A"/>
    </source>
</evidence>
<comment type="function">
    <text evidence="1 6 8">Glutathione S-transferase that catalyzes the nucleophilic attack of the sulfur atom of glutathione on the electrophilic groups of a wide range of exogenous and endogenous compounds (PubMed:9606968). Involved in the formation of glutathione conjugates of both prostaglandin A2 (PGA2) and prostaglandin J2 (PGJ2). It also catalyzes the isomerization of D5-androstene-3,17-dione (AD) into D4-androstene-3,17-dione and may therefore play an important role in hormone biosynthesis. Through its glutathione-dependent peroxidase activity toward the fatty acid hydroperoxide (13S)-hydroperoxy-(9Z,11E)-octadecadienoate/13-HPODE it is also involved in the metabolism of oxidized linoleic acid (By similarity).</text>
</comment>
<comment type="catalytic activity">
    <reaction evidence="6 8">
        <text>RX + glutathione = an S-substituted glutathione + a halide anion + H(+)</text>
        <dbReference type="Rhea" id="RHEA:16437"/>
        <dbReference type="ChEBI" id="CHEBI:15378"/>
        <dbReference type="ChEBI" id="CHEBI:16042"/>
        <dbReference type="ChEBI" id="CHEBI:17792"/>
        <dbReference type="ChEBI" id="CHEBI:57925"/>
        <dbReference type="ChEBI" id="CHEBI:90779"/>
        <dbReference type="EC" id="2.5.1.18"/>
    </reaction>
    <physiologicalReaction direction="left-to-right" evidence="8">
        <dbReference type="Rhea" id="RHEA:16438"/>
    </physiologicalReaction>
</comment>
<comment type="catalytic activity">
    <reaction evidence="1">
        <text>prostaglandin A2 + glutathione = prostaglandin A2-S-(R)-glutathione</text>
        <dbReference type="Rhea" id="RHEA:50796"/>
        <dbReference type="ChEBI" id="CHEBI:57925"/>
        <dbReference type="ChEBI" id="CHEBI:133370"/>
        <dbReference type="ChEBI" id="CHEBI:133768"/>
    </reaction>
    <physiologicalReaction direction="left-to-right" evidence="1">
        <dbReference type="Rhea" id="RHEA:50797"/>
    </physiologicalReaction>
</comment>
<comment type="catalytic activity">
    <reaction evidence="1">
        <text>prostaglandin J2 + glutathione = prostaglandin J2-S-(R)-glutathione</text>
        <dbReference type="Rhea" id="RHEA:50804"/>
        <dbReference type="ChEBI" id="CHEBI:57925"/>
        <dbReference type="ChEBI" id="CHEBI:133396"/>
        <dbReference type="ChEBI" id="CHEBI:133771"/>
    </reaction>
    <physiologicalReaction direction="left-to-right" evidence="1">
        <dbReference type="Rhea" id="RHEA:50805"/>
    </physiologicalReaction>
</comment>
<comment type="catalytic activity">
    <reaction evidence="1">
        <text>(13S)-hydroperoxy-(9Z,11E)-octadecadienoate + 2 glutathione = (13S)-hydroxy-(9Z,11E)-octadecadienoate + glutathione disulfide + H2O</text>
        <dbReference type="Rhea" id="RHEA:48888"/>
        <dbReference type="ChEBI" id="CHEBI:15377"/>
        <dbReference type="ChEBI" id="CHEBI:57466"/>
        <dbReference type="ChEBI" id="CHEBI:57925"/>
        <dbReference type="ChEBI" id="CHEBI:58297"/>
        <dbReference type="ChEBI" id="CHEBI:90850"/>
    </reaction>
    <physiologicalReaction direction="left-to-right" evidence="1">
        <dbReference type="Rhea" id="RHEA:48889"/>
    </physiologicalReaction>
</comment>
<comment type="catalytic activity">
    <reaction evidence="1">
        <text>androst-5-ene-3,17-dione = androst-4-ene-3,17-dione</text>
        <dbReference type="Rhea" id="RHEA:43936"/>
        <dbReference type="ChEBI" id="CHEBI:16422"/>
        <dbReference type="ChEBI" id="CHEBI:83865"/>
    </reaction>
    <physiologicalReaction direction="left-to-right" evidence="1">
        <dbReference type="Rhea" id="RHEA:43937"/>
    </physiologicalReaction>
</comment>
<comment type="biophysicochemical properties">
    <kinetics>
        <KM evidence="6">35 uM for 7,8-Dihydroxy-9,10-epoxy-7,8,9,10-tetrahydrobenzo[a]pyrene</KM>
        <Vmax evidence="6">5200.0 nmol/min/mg enzyme for 7,8-Dihydroxy-9,10-epoxy-7,8,9,10-tetrahydrobenzo[a]pyrene</Vmax>
    </kinetics>
</comment>
<comment type="subunit">
    <text evidence="4">Homodimer.</text>
</comment>
<comment type="tissue specificity">
    <text evidence="6">Expressed in the liver, skin and kidney.</text>
</comment>
<comment type="induction">
    <text evidence="5">Induced in the liver by beta-naphthoflavone (BNF) and 2(3)-t-butyl-4-hydroxyanisole (BHA).</text>
</comment>
<comment type="similarity">
    <text evidence="7">Belongs to the GST superfamily. Alpha family.</text>
</comment>
<dbReference type="EC" id="2.5.1.18" evidence="6 8"/>
<dbReference type="EC" id="1.11.1.-" evidence="1"/>
<dbReference type="EC" id="5.3.3.-" evidence="1"/>
<dbReference type="EMBL" id="M19256">
    <property type="protein sequence ID" value="AAA37750.1"/>
    <property type="status" value="ALT_SEQ"/>
    <property type="molecule type" value="Genomic_DNA"/>
</dbReference>
<dbReference type="EMBL" id="M19251">
    <property type="protein sequence ID" value="AAA37750.1"/>
    <property type="status" value="JOINED"/>
    <property type="molecule type" value="Genomic_DNA"/>
</dbReference>
<dbReference type="EMBL" id="M19252">
    <property type="protein sequence ID" value="AAA37750.1"/>
    <property type="status" value="JOINED"/>
    <property type="molecule type" value="Genomic_DNA"/>
</dbReference>
<dbReference type="EMBL" id="M19253">
    <property type="protein sequence ID" value="AAA37750.1"/>
    <property type="status" value="JOINED"/>
    <property type="molecule type" value="Genomic_DNA"/>
</dbReference>
<dbReference type="EMBL" id="M19254">
    <property type="protein sequence ID" value="AAA37750.1"/>
    <property type="status" value="JOINED"/>
    <property type="molecule type" value="Genomic_DNA"/>
</dbReference>
<dbReference type="EMBL" id="M19255">
    <property type="protein sequence ID" value="AAA37750.1"/>
    <property type="status" value="JOINED"/>
    <property type="molecule type" value="Genomic_DNA"/>
</dbReference>
<dbReference type="EMBL" id="BC132572">
    <property type="protein sequence ID" value="AAI32573.1"/>
    <property type="molecule type" value="mRNA"/>
</dbReference>
<dbReference type="EMBL" id="BC132576">
    <property type="protein sequence ID" value="AAI32577.1"/>
    <property type="molecule type" value="mRNA"/>
</dbReference>
<dbReference type="CCDS" id="CCDS23358.1"/>
<dbReference type="PIR" id="A27848">
    <property type="entry name" value="A27848"/>
</dbReference>
<dbReference type="RefSeq" id="NP_032207.3">
    <property type="nucleotide sequence ID" value="NM_008181.3"/>
</dbReference>
<dbReference type="PDB" id="1F3A">
    <property type="method" value="X-ray"/>
    <property type="resolution" value="1.90 A"/>
    <property type="chains" value="A/B=2-223"/>
</dbReference>
<dbReference type="PDB" id="1F3B">
    <property type="method" value="X-ray"/>
    <property type="resolution" value="2.00 A"/>
    <property type="chains" value="A/B=2-223"/>
</dbReference>
<dbReference type="PDBsum" id="1F3A"/>
<dbReference type="PDBsum" id="1F3B"/>
<dbReference type="SMR" id="P13745"/>
<dbReference type="BioGRID" id="200090">
    <property type="interactions" value="2"/>
</dbReference>
<dbReference type="FunCoup" id="P13745">
    <property type="interactions" value="183"/>
</dbReference>
<dbReference type="STRING" id="10090.ENSMUSP00000096139"/>
<dbReference type="iPTMnet" id="P13745"/>
<dbReference type="PhosphoSitePlus" id="P13745"/>
<dbReference type="SwissPalm" id="P13745"/>
<dbReference type="jPOST" id="P13745"/>
<dbReference type="PaxDb" id="10090-ENSMUSP00000096139"/>
<dbReference type="PeptideAtlas" id="P13745"/>
<dbReference type="ProteomicsDB" id="271447"/>
<dbReference type="DNASU" id="14857"/>
<dbReference type="Ensembl" id="ENSMUST00000098537.4">
    <property type="protein sequence ID" value="ENSMUSP00000096139.4"/>
    <property type="gene ID" value="ENSMUSG00000074183.4"/>
</dbReference>
<dbReference type="GeneID" id="14857"/>
<dbReference type="KEGG" id="mmu:14857"/>
<dbReference type="UCSC" id="uc009qtz.1">
    <property type="organism name" value="mouse"/>
</dbReference>
<dbReference type="AGR" id="MGI:1095417"/>
<dbReference type="CTD" id="2938"/>
<dbReference type="MGI" id="MGI:1095417">
    <property type="gene designation" value="Gsta1"/>
</dbReference>
<dbReference type="VEuPathDB" id="HostDB:ENSMUSG00000074183"/>
<dbReference type="eggNOG" id="KOG1695">
    <property type="taxonomic scope" value="Eukaryota"/>
</dbReference>
<dbReference type="GeneTree" id="ENSGT00940000154526"/>
<dbReference type="HOGENOM" id="CLU_039475_4_0_1"/>
<dbReference type="InParanoid" id="P13745"/>
<dbReference type="OMA" id="AYLNIDY"/>
<dbReference type="OrthoDB" id="414243at2759"/>
<dbReference type="PhylomeDB" id="P13745"/>
<dbReference type="TreeFam" id="TF105321"/>
<dbReference type="Reactome" id="R-MMU-156590">
    <property type="pathway name" value="Glutathione conjugation"/>
</dbReference>
<dbReference type="Reactome" id="R-MMU-189483">
    <property type="pathway name" value="Heme degradation"/>
</dbReference>
<dbReference type="Reactome" id="R-MMU-9748787">
    <property type="pathway name" value="Azathioprine ADME"/>
</dbReference>
<dbReference type="BioGRID-ORCS" id="14857">
    <property type="hits" value="2 hits in 27 CRISPR screens"/>
</dbReference>
<dbReference type="EvolutionaryTrace" id="P13745"/>
<dbReference type="PRO" id="PR:P13745"/>
<dbReference type="Proteomes" id="UP000000589">
    <property type="component" value="Chromosome 9"/>
</dbReference>
<dbReference type="RNAct" id="P13745">
    <property type="molecule type" value="protein"/>
</dbReference>
<dbReference type="Bgee" id="ENSMUSG00000074183">
    <property type="expression patterns" value="Expressed in duodenum and 55 other cell types or tissues"/>
</dbReference>
<dbReference type="GO" id="GO:0005829">
    <property type="term" value="C:cytosol"/>
    <property type="evidence" value="ECO:0000314"/>
    <property type="project" value="FlyBase"/>
</dbReference>
<dbReference type="GO" id="GO:0005739">
    <property type="term" value="C:mitochondrion"/>
    <property type="evidence" value="ECO:0000314"/>
    <property type="project" value="FlyBase"/>
</dbReference>
<dbReference type="GO" id="GO:0004364">
    <property type="term" value="F:glutathione transferase activity"/>
    <property type="evidence" value="ECO:0000314"/>
    <property type="project" value="UniProtKB"/>
</dbReference>
<dbReference type="GO" id="GO:0004601">
    <property type="term" value="F:peroxidase activity"/>
    <property type="evidence" value="ECO:0007669"/>
    <property type="project" value="UniProtKB-KW"/>
</dbReference>
<dbReference type="GO" id="GO:0004769">
    <property type="term" value="F:steroid Delta-isomerase activity"/>
    <property type="evidence" value="ECO:0000250"/>
    <property type="project" value="UniProtKB"/>
</dbReference>
<dbReference type="GO" id="GO:1901687">
    <property type="term" value="P:glutathione derivative biosynthetic process"/>
    <property type="evidence" value="ECO:0000250"/>
    <property type="project" value="UniProtKB"/>
</dbReference>
<dbReference type="GO" id="GO:0006749">
    <property type="term" value="P:glutathione metabolic process"/>
    <property type="evidence" value="ECO:0000250"/>
    <property type="project" value="UniProtKB"/>
</dbReference>
<dbReference type="GO" id="GO:0006693">
    <property type="term" value="P:prostaglandin metabolic process"/>
    <property type="evidence" value="ECO:0000250"/>
    <property type="project" value="UniProtKB"/>
</dbReference>
<dbReference type="GO" id="GO:0009617">
    <property type="term" value="P:response to bacterium"/>
    <property type="evidence" value="ECO:0000270"/>
    <property type="project" value="MGI"/>
</dbReference>
<dbReference type="GO" id="GO:0061771">
    <property type="term" value="P:response to caloric restriction"/>
    <property type="evidence" value="ECO:0000314"/>
    <property type="project" value="MGI"/>
</dbReference>
<dbReference type="GO" id="GO:0035634">
    <property type="term" value="P:response to stilbenoid"/>
    <property type="evidence" value="ECO:0000270"/>
    <property type="project" value="UniProtKB"/>
</dbReference>
<dbReference type="CDD" id="cd03208">
    <property type="entry name" value="GST_C_Alpha"/>
    <property type="match status" value="1"/>
</dbReference>
<dbReference type="CDD" id="cd03077">
    <property type="entry name" value="GST_N_Alpha"/>
    <property type="match status" value="1"/>
</dbReference>
<dbReference type="FunFam" id="1.20.1050.10:FF:000005">
    <property type="entry name" value="Glutathione S-transferase A1"/>
    <property type="match status" value="1"/>
</dbReference>
<dbReference type="Gene3D" id="1.20.1050.10">
    <property type="match status" value="1"/>
</dbReference>
<dbReference type="Gene3D" id="3.40.30.10">
    <property type="entry name" value="Glutaredoxin"/>
    <property type="match status" value="1"/>
</dbReference>
<dbReference type="InterPro" id="IPR010987">
    <property type="entry name" value="Glutathione-S-Trfase_C-like"/>
</dbReference>
<dbReference type="InterPro" id="IPR036282">
    <property type="entry name" value="Glutathione-S-Trfase_C_sf"/>
</dbReference>
<dbReference type="InterPro" id="IPR040079">
    <property type="entry name" value="Glutathione_S-Trfase"/>
</dbReference>
<dbReference type="InterPro" id="IPR004045">
    <property type="entry name" value="Glutathione_S-Trfase_N"/>
</dbReference>
<dbReference type="InterPro" id="IPR003080">
    <property type="entry name" value="GST_alpha"/>
</dbReference>
<dbReference type="InterPro" id="IPR004046">
    <property type="entry name" value="GST_C"/>
</dbReference>
<dbReference type="InterPro" id="IPR050213">
    <property type="entry name" value="GST_superfamily"/>
</dbReference>
<dbReference type="InterPro" id="IPR036249">
    <property type="entry name" value="Thioredoxin-like_sf"/>
</dbReference>
<dbReference type="PANTHER" id="PTHR11571">
    <property type="entry name" value="GLUTATHIONE S-TRANSFERASE"/>
    <property type="match status" value="1"/>
</dbReference>
<dbReference type="PANTHER" id="PTHR11571:SF233">
    <property type="entry name" value="GLUTATHIONE S-TRANSFERASE-RELATED"/>
    <property type="match status" value="1"/>
</dbReference>
<dbReference type="Pfam" id="PF00043">
    <property type="entry name" value="GST_C"/>
    <property type="match status" value="1"/>
</dbReference>
<dbReference type="Pfam" id="PF02798">
    <property type="entry name" value="GST_N"/>
    <property type="match status" value="1"/>
</dbReference>
<dbReference type="PRINTS" id="PR01266">
    <property type="entry name" value="GSTRNSFRASEA"/>
</dbReference>
<dbReference type="SFLD" id="SFLDG01205">
    <property type="entry name" value="AMPS.1"/>
    <property type="match status" value="1"/>
</dbReference>
<dbReference type="SFLD" id="SFLDS00019">
    <property type="entry name" value="Glutathione_Transferase_(cytos"/>
    <property type="match status" value="1"/>
</dbReference>
<dbReference type="SUPFAM" id="SSF47616">
    <property type="entry name" value="GST C-terminal domain-like"/>
    <property type="match status" value="1"/>
</dbReference>
<dbReference type="SUPFAM" id="SSF52833">
    <property type="entry name" value="Thioredoxin-like"/>
    <property type="match status" value="1"/>
</dbReference>
<dbReference type="PROSITE" id="PS50405">
    <property type="entry name" value="GST_CTER"/>
    <property type="match status" value="1"/>
</dbReference>
<dbReference type="PROSITE" id="PS50404">
    <property type="entry name" value="GST_NTER"/>
    <property type="match status" value="1"/>
</dbReference>
<organism>
    <name type="scientific">Mus musculus</name>
    <name type="common">Mouse</name>
    <dbReference type="NCBI Taxonomy" id="10090"/>
    <lineage>
        <taxon>Eukaryota</taxon>
        <taxon>Metazoa</taxon>
        <taxon>Chordata</taxon>
        <taxon>Craniata</taxon>
        <taxon>Vertebrata</taxon>
        <taxon>Euteleostomi</taxon>
        <taxon>Mammalia</taxon>
        <taxon>Eutheria</taxon>
        <taxon>Euarchontoglires</taxon>
        <taxon>Glires</taxon>
        <taxon>Rodentia</taxon>
        <taxon>Myomorpha</taxon>
        <taxon>Muroidea</taxon>
        <taxon>Muridae</taxon>
        <taxon>Murinae</taxon>
        <taxon>Mus</taxon>
        <taxon>Mus</taxon>
    </lineage>
</organism>
<reference key="1">
    <citation type="journal article" date="1987" name="DNA">
        <title>Mouse glutathione S-transferase Ya subunit: gene structure and sequence.</title>
        <authorList>
            <person name="Daniel V."/>
            <person name="Sharon R."/>
            <person name="Tichauer Y."/>
            <person name="Sarid S."/>
        </authorList>
    </citation>
    <scope>NUCLEOTIDE SEQUENCE [GENOMIC DNA]</scope>
</reference>
<reference key="2">
    <citation type="journal article" date="1998" name="Arch. Biochem. Biophys.">
        <title>Cloning, expression, and biochemical characterization of a functionally novel alpha class glutathione S-transferase with exceptional activity in the glutathione conjugation of (+)-anti-7,8-dihydroxy-9,10-oxy-7,8,9,10-tetrahydrobenzo(a)pyrene.</title>
        <authorList>
            <person name="Xia H."/>
            <person name="Pan S.S."/>
            <person name="Hu X."/>
            <person name="Srivastava S.K."/>
            <person name="Pal A."/>
            <person name="Singh S.V."/>
        </authorList>
    </citation>
    <scope>NUCLEOTIDE SEQUENCE [MRNA]</scope>
    <scope>PROTEIN SEQUENCE</scope>
    <scope>FUNCTION</scope>
    <scope>CATALYTIC ACTIVITY</scope>
    <scope>BIOPHYSICOCHEMICAL PROPERTIES</scope>
    <scope>TISSUE SPECIFICITY</scope>
</reference>
<reference key="3">
    <citation type="journal article" date="2004" name="Genome Res.">
        <title>The status, quality, and expansion of the NIH full-length cDNA project: the Mammalian Gene Collection (MGC).</title>
        <authorList>
            <consortium name="The MGC Project Team"/>
        </authorList>
    </citation>
    <scope>NUCLEOTIDE SEQUENCE [LARGE SCALE MRNA]</scope>
    <source>
        <tissue>Brain</tissue>
    </source>
</reference>
<reference key="4">
    <citation type="journal article" date="1991" name="Biochem. J.">
        <title>Regulation of mouse glutathione S-transferases by chemoprotectors. Molecular evidence for the existence of three distinct alpha-class glutathione S-transferase subunits, Ya1, Ya2, and Ya3, in mouse liver.</title>
        <authorList>
            <person name="McLellan L.I."/>
            <person name="Kerr L.A."/>
            <person name="Cronshaw A.D."/>
            <person name="Hayes J.D."/>
        </authorList>
    </citation>
    <scope>PROTEIN SEQUENCE OF 16-36; 51-59; 63-165 AND 208-223</scope>
    <scope>INDUCTION</scope>
    <source>
        <tissue>Liver</tissue>
    </source>
</reference>
<reference key="5">
    <citation type="journal article" date="2000" name="Biochemistry">
        <title>Residue R216 and catalytic efficiency of a murine class alpha glutathione S-transferase toward benzo[a]pyrene 7(R),8(S)-diol 9(S), 10(R)-epoxide.</title>
        <authorList>
            <person name="Gu Y."/>
            <person name="Singh S.V."/>
            <person name="Ji X."/>
        </authorList>
    </citation>
    <scope>X-RAY CRYSTALLOGRAPHY (1.9 ANGSTROMS) IN COMPLEXES WITH GLUTATHIONE AND SUBSTRATE</scope>
    <scope>FUNCTION</scope>
    <scope>CATALYTIC ACTIVITY</scope>
    <scope>SUBUNIT</scope>
    <scope>REGION</scope>
</reference>
<accession>P13745</accession>
<accession>A2RTN4</accession>
<protein>
    <recommendedName>
        <fullName evidence="7">Glutathione S-transferase A1</fullName>
        <ecNumber evidence="6 8">2.5.1.18</ecNumber>
    </recommendedName>
    <alternativeName>
        <fullName evidence="1">13-hydroperoxyoctadecadienoate peroxidase</fullName>
        <ecNumber evidence="1">1.11.1.-</ecNumber>
    </alternativeName>
    <alternativeName>
        <fullName evidence="1">Androst-5-ene-3,17-dione isomerase</fullName>
        <ecNumber evidence="1">5.3.3.-</ecNumber>
    </alternativeName>
    <alternativeName>
        <fullName>GST class-alpha member 1</fullName>
    </alternativeName>
    <alternativeName>
        <fullName>Glutathione S-transferase Ya</fullName>
    </alternativeName>
    <alternativeName>
        <fullName>Glutathione S-transferase Ya1</fullName>
    </alternativeName>
    <component>
        <recommendedName>
            <fullName>Glutathione S-transferase A1, N-terminally processed</fullName>
        </recommendedName>
    </component>
</protein>
<feature type="chain" id="PRO_0000423204" description="Glutathione S-transferase A1">
    <location>
        <begin position="1"/>
        <end position="223"/>
    </location>
</feature>
<feature type="initiator methionine" description="Removed; alternate" evidence="2">
    <location>
        <position position="1"/>
    </location>
</feature>
<feature type="chain" id="PRO_0000185788" description="Glutathione S-transferase A1, N-terminally processed">
    <location>
        <begin position="2"/>
        <end position="223"/>
    </location>
</feature>
<feature type="domain" description="GST N-terminal">
    <location>
        <begin position="3"/>
        <end position="83"/>
    </location>
</feature>
<feature type="domain" description="GST C-terminal">
    <location>
        <begin position="85"/>
        <end position="208"/>
    </location>
</feature>
<feature type="binding site" evidence="8">
    <location>
        <position position="9"/>
    </location>
    <ligand>
        <name>glutathione</name>
        <dbReference type="ChEBI" id="CHEBI:57925"/>
    </ligand>
</feature>
<feature type="binding site" evidence="4">
    <location>
        <position position="45"/>
    </location>
    <ligand>
        <name>glutathione</name>
        <dbReference type="ChEBI" id="CHEBI:57925"/>
    </ligand>
</feature>
<feature type="binding site" evidence="4">
    <location>
        <begin position="54"/>
        <end position="55"/>
    </location>
    <ligand>
        <name>glutathione</name>
        <dbReference type="ChEBI" id="CHEBI:57925"/>
    </ligand>
</feature>
<feature type="binding site" evidence="4">
    <location>
        <begin position="67"/>
        <end position="68"/>
    </location>
    <ligand>
        <name>glutathione</name>
        <dbReference type="ChEBI" id="CHEBI:57925"/>
    </ligand>
</feature>
<feature type="modified residue" description="N-acetylmethionine" evidence="3">
    <location>
        <position position="1"/>
    </location>
</feature>
<feature type="modified residue" description="N-acetylalanine; in Glutathione S-transferase A1, N-terminally processed" evidence="2">
    <location>
        <position position="2"/>
    </location>
</feature>
<feature type="modified residue" description="N6-succinyllysine" evidence="2">
    <location>
        <position position="4"/>
    </location>
</feature>
<feature type="strand" evidence="9">
    <location>
        <begin position="6"/>
        <end position="12"/>
    </location>
</feature>
<feature type="turn" evidence="9">
    <location>
        <begin position="14"/>
        <end position="16"/>
    </location>
</feature>
<feature type="helix" evidence="9">
    <location>
        <begin position="17"/>
        <end position="25"/>
    </location>
</feature>
<feature type="strand" evidence="9">
    <location>
        <begin position="31"/>
        <end position="35"/>
    </location>
</feature>
<feature type="helix" evidence="9">
    <location>
        <begin position="38"/>
        <end position="46"/>
    </location>
</feature>
<feature type="strand" evidence="9">
    <location>
        <begin position="57"/>
        <end position="60"/>
    </location>
</feature>
<feature type="strand" evidence="9">
    <location>
        <begin position="63"/>
        <end position="67"/>
    </location>
</feature>
<feature type="helix" evidence="9">
    <location>
        <begin position="68"/>
        <end position="78"/>
    </location>
</feature>
<feature type="helix" evidence="9">
    <location>
        <begin position="86"/>
        <end position="108"/>
    </location>
</feature>
<feature type="helix" evidence="9">
    <location>
        <begin position="109"/>
        <end position="111"/>
    </location>
</feature>
<feature type="turn" evidence="9">
    <location>
        <begin position="114"/>
        <end position="116"/>
    </location>
</feature>
<feature type="helix" evidence="9">
    <location>
        <begin position="117"/>
        <end position="130"/>
    </location>
</feature>
<feature type="helix" evidence="9">
    <location>
        <begin position="132"/>
        <end position="143"/>
    </location>
</feature>
<feature type="strand" evidence="9">
    <location>
        <begin position="146"/>
        <end position="149"/>
    </location>
</feature>
<feature type="helix" evidence="9">
    <location>
        <begin position="155"/>
        <end position="171"/>
    </location>
</feature>
<feature type="helix" evidence="9">
    <location>
        <begin position="172"/>
        <end position="175"/>
    </location>
</feature>
<feature type="helix" evidence="9">
    <location>
        <begin position="179"/>
        <end position="189"/>
    </location>
</feature>
<feature type="helix" evidence="9">
    <location>
        <begin position="192"/>
        <end position="198"/>
    </location>
</feature>
<feature type="helix" evidence="9">
    <location>
        <begin position="210"/>
        <end position="217"/>
    </location>
</feature>
<sequence length="223" mass="25608">MAGKPVLHYFNARGRMECIRWLLAAAGVEFEEKFIQSPEDLEKLKKDGNLMFDQVPMVEIDGMKLAQTRAILNYIATKYDLYGKDMKERALIDMYSEGILDLTEMIGQLVLCPPDQREAKTALAKDRTKNRYLPAFEKVLKSHGQDYLVGNRLTRVDIHLLEVLLYVEEFDASLLTPFPLLKAFKSRISSLPNVKKFLQPGSQRKPPMDAKQIQEARKAFKIQ</sequence>
<name>GSTA1_MOUSE</name>
<gene>
    <name type="primary">Gsta1</name>
    <name type="synonym">Gsta</name>
    <name type="synonym">Gstya</name>
</gene>